<proteinExistence type="inferred from homology"/>
<gene>
    <name evidence="1" type="primary">epmA</name>
    <name type="synonym">yjeA</name>
    <name type="ordered locus">ETA_29770</name>
</gene>
<name>EPMA_ERWT9</name>
<organism>
    <name type="scientific">Erwinia tasmaniensis (strain DSM 17950 / CFBP 7177 / CIP 109463 / NCPPB 4357 / Et1/99)</name>
    <dbReference type="NCBI Taxonomy" id="465817"/>
    <lineage>
        <taxon>Bacteria</taxon>
        <taxon>Pseudomonadati</taxon>
        <taxon>Pseudomonadota</taxon>
        <taxon>Gammaproteobacteria</taxon>
        <taxon>Enterobacterales</taxon>
        <taxon>Erwiniaceae</taxon>
        <taxon>Erwinia</taxon>
    </lineage>
</organism>
<feature type="chain" id="PRO_1000097901" description="Elongation factor P--(R)-beta-lysine ligase">
    <location>
        <begin position="1"/>
        <end position="325"/>
    </location>
</feature>
<feature type="binding site" evidence="1">
    <location>
        <begin position="76"/>
        <end position="78"/>
    </location>
    <ligand>
        <name>substrate</name>
    </ligand>
</feature>
<feature type="binding site" evidence="1">
    <location>
        <begin position="100"/>
        <end position="102"/>
    </location>
    <ligand>
        <name>ATP</name>
        <dbReference type="ChEBI" id="CHEBI:30616"/>
    </ligand>
</feature>
<feature type="binding site" evidence="1">
    <location>
        <position position="109"/>
    </location>
    <ligand>
        <name>ATP</name>
        <dbReference type="ChEBI" id="CHEBI:30616"/>
    </ligand>
</feature>
<feature type="binding site" evidence="1">
    <location>
        <position position="118"/>
    </location>
    <ligand>
        <name>substrate</name>
    </ligand>
</feature>
<feature type="binding site" evidence="1">
    <location>
        <begin position="244"/>
        <end position="245"/>
    </location>
    <ligand>
        <name>ATP</name>
        <dbReference type="ChEBI" id="CHEBI:30616"/>
    </ligand>
</feature>
<feature type="binding site" evidence="1">
    <location>
        <position position="251"/>
    </location>
    <ligand>
        <name>substrate</name>
    </ligand>
</feature>
<feature type="binding site" evidence="1">
    <location>
        <position position="300"/>
    </location>
    <ligand>
        <name>ATP</name>
        <dbReference type="ChEBI" id="CHEBI:30616"/>
    </ligand>
</feature>
<reference key="1">
    <citation type="journal article" date="2008" name="Environ. Microbiol.">
        <title>The genome of Erwinia tasmaniensis strain Et1/99, a non-pathogenic bacterium in the genus Erwinia.</title>
        <authorList>
            <person name="Kube M."/>
            <person name="Migdoll A.M."/>
            <person name="Mueller I."/>
            <person name="Kuhl H."/>
            <person name="Beck A."/>
            <person name="Reinhardt R."/>
            <person name="Geider K."/>
        </authorList>
    </citation>
    <scope>NUCLEOTIDE SEQUENCE [LARGE SCALE GENOMIC DNA]</scope>
    <source>
        <strain>DSM 17950 / CFBP 7177 / CIP 109463 / NCPPB 4357 / Et1/99</strain>
    </source>
</reference>
<comment type="function">
    <text evidence="1">With EpmB is involved in the beta-lysylation step of the post-translational modification of translation elongation factor P (EF-P). Catalyzes the ATP-dependent activation of (R)-beta-lysine produced by EpmB, forming a lysyl-adenylate, from which the beta-lysyl moiety is then transferred to the epsilon-amino group of a conserved specific lysine residue in EF-P.</text>
</comment>
<comment type="catalytic activity">
    <reaction evidence="1">
        <text>D-beta-lysine + L-lysyl-[protein] + ATP = N(6)-((3R)-3,6-diaminohexanoyl)-L-lysyl-[protein] + AMP + diphosphate + H(+)</text>
        <dbReference type="Rhea" id="RHEA:83435"/>
        <dbReference type="Rhea" id="RHEA-COMP:9752"/>
        <dbReference type="Rhea" id="RHEA-COMP:20131"/>
        <dbReference type="ChEBI" id="CHEBI:15378"/>
        <dbReference type="ChEBI" id="CHEBI:29969"/>
        <dbReference type="ChEBI" id="CHEBI:30616"/>
        <dbReference type="ChEBI" id="CHEBI:33019"/>
        <dbReference type="ChEBI" id="CHEBI:84138"/>
        <dbReference type="ChEBI" id="CHEBI:156053"/>
        <dbReference type="ChEBI" id="CHEBI:456215"/>
    </reaction>
    <physiologicalReaction direction="left-to-right" evidence="1">
        <dbReference type="Rhea" id="RHEA:83436"/>
    </physiologicalReaction>
</comment>
<comment type="subunit">
    <text evidence="1">Homodimer.</text>
</comment>
<comment type="similarity">
    <text evidence="1">Belongs to the class-II aminoacyl-tRNA synthetase family. EpmA subfamily.</text>
</comment>
<sequence>MSDTASWQPSASIANLLKRAAIMAEIRRFFADRGVLEVETPAMSQATVTDVHLFPFQTRFVGPGAAAGIDLYLMTSPEYHMKRLLAAGSGPIYQLCRSFRNEEMGRHHNPEFTMLEWYRPHYDMYRLINEVDDLLQQVLECAPAETLSYQQAFQRHLEIDPLSADKAQLREVAQKLGAGDLANREEDRDTLLQLLFVLGVEPEIGKEKPAFVYHFPATQAALAEISPEDHRVAERFEVYFKGIELANGFRELTDSREQRQRFEQDNRKRAAAGLPQQPIDTYLLDALSAGMPESSGVALGVDRLVMLALKAEQLSDVIAFTVDRC</sequence>
<evidence type="ECO:0000255" key="1">
    <source>
        <dbReference type="HAMAP-Rule" id="MF_00174"/>
    </source>
</evidence>
<keyword id="KW-0067">ATP-binding</keyword>
<keyword id="KW-0436">Ligase</keyword>
<keyword id="KW-0547">Nucleotide-binding</keyword>
<keyword id="KW-1185">Reference proteome</keyword>
<protein>
    <recommendedName>
        <fullName evidence="1">Elongation factor P--(R)-beta-lysine ligase</fullName>
        <shortName evidence="1">EF-P--(R)-beta-lysine ligase</shortName>
        <ecNumber evidence="1">6.3.2.-</ecNumber>
    </recommendedName>
    <alternativeName>
        <fullName evidence="1">EF-P post-translational modification enzyme A</fullName>
    </alternativeName>
    <alternativeName>
        <fullName evidence="1">EF-P-lysine lysyltransferase</fullName>
    </alternativeName>
</protein>
<dbReference type="EC" id="6.3.2.-" evidence="1"/>
<dbReference type="EMBL" id="CU468135">
    <property type="protein sequence ID" value="CAO98023.1"/>
    <property type="molecule type" value="Genomic_DNA"/>
</dbReference>
<dbReference type="RefSeq" id="WP_012442675.1">
    <property type="nucleotide sequence ID" value="NC_010694.1"/>
</dbReference>
<dbReference type="SMR" id="B2VCV6"/>
<dbReference type="STRING" id="465817.ETA_29770"/>
<dbReference type="KEGG" id="eta:ETA_29770"/>
<dbReference type="eggNOG" id="COG2269">
    <property type="taxonomic scope" value="Bacteria"/>
</dbReference>
<dbReference type="HOGENOM" id="CLU_008255_1_1_6"/>
<dbReference type="OrthoDB" id="9802326at2"/>
<dbReference type="Proteomes" id="UP000001726">
    <property type="component" value="Chromosome"/>
</dbReference>
<dbReference type="GO" id="GO:0005829">
    <property type="term" value="C:cytosol"/>
    <property type="evidence" value="ECO:0007669"/>
    <property type="project" value="TreeGrafter"/>
</dbReference>
<dbReference type="GO" id="GO:0016880">
    <property type="term" value="F:acid-ammonia (or amide) ligase activity"/>
    <property type="evidence" value="ECO:0007669"/>
    <property type="project" value="UniProtKB-UniRule"/>
</dbReference>
<dbReference type="GO" id="GO:0005524">
    <property type="term" value="F:ATP binding"/>
    <property type="evidence" value="ECO:0007669"/>
    <property type="project" value="UniProtKB-UniRule"/>
</dbReference>
<dbReference type="GO" id="GO:0004824">
    <property type="term" value="F:lysine-tRNA ligase activity"/>
    <property type="evidence" value="ECO:0007669"/>
    <property type="project" value="InterPro"/>
</dbReference>
<dbReference type="GO" id="GO:0000049">
    <property type="term" value="F:tRNA binding"/>
    <property type="evidence" value="ECO:0007669"/>
    <property type="project" value="TreeGrafter"/>
</dbReference>
<dbReference type="GO" id="GO:0006430">
    <property type="term" value="P:lysyl-tRNA aminoacylation"/>
    <property type="evidence" value="ECO:0007669"/>
    <property type="project" value="InterPro"/>
</dbReference>
<dbReference type="FunFam" id="3.30.930.10:FF:000017">
    <property type="entry name" value="Elongation factor P--(R)-beta-lysine ligase"/>
    <property type="match status" value="1"/>
</dbReference>
<dbReference type="Gene3D" id="3.30.930.10">
    <property type="entry name" value="Bira Bifunctional Protein, Domain 2"/>
    <property type="match status" value="1"/>
</dbReference>
<dbReference type="HAMAP" id="MF_00174">
    <property type="entry name" value="EF_P_modif_A"/>
    <property type="match status" value="1"/>
</dbReference>
<dbReference type="InterPro" id="IPR004364">
    <property type="entry name" value="Aa-tRNA-synt_II"/>
</dbReference>
<dbReference type="InterPro" id="IPR006195">
    <property type="entry name" value="aa-tRNA-synth_II"/>
</dbReference>
<dbReference type="InterPro" id="IPR045864">
    <property type="entry name" value="aa-tRNA-synth_II/BPL/LPL"/>
</dbReference>
<dbReference type="InterPro" id="IPR004525">
    <property type="entry name" value="EpmA"/>
</dbReference>
<dbReference type="InterPro" id="IPR018149">
    <property type="entry name" value="Lys-tRNA-synth_II_C"/>
</dbReference>
<dbReference type="NCBIfam" id="TIGR00462">
    <property type="entry name" value="genX"/>
    <property type="match status" value="1"/>
</dbReference>
<dbReference type="NCBIfam" id="NF006828">
    <property type="entry name" value="PRK09350.1"/>
    <property type="match status" value="1"/>
</dbReference>
<dbReference type="PANTHER" id="PTHR42918:SF6">
    <property type="entry name" value="ELONGATION FACTOR P--(R)-BETA-LYSINE LIGASE"/>
    <property type="match status" value="1"/>
</dbReference>
<dbReference type="PANTHER" id="PTHR42918">
    <property type="entry name" value="LYSYL-TRNA SYNTHETASE"/>
    <property type="match status" value="1"/>
</dbReference>
<dbReference type="Pfam" id="PF00152">
    <property type="entry name" value="tRNA-synt_2"/>
    <property type="match status" value="1"/>
</dbReference>
<dbReference type="PRINTS" id="PR00982">
    <property type="entry name" value="TRNASYNTHLYS"/>
</dbReference>
<dbReference type="SUPFAM" id="SSF55681">
    <property type="entry name" value="Class II aaRS and biotin synthetases"/>
    <property type="match status" value="1"/>
</dbReference>
<dbReference type="PROSITE" id="PS50862">
    <property type="entry name" value="AA_TRNA_LIGASE_II"/>
    <property type="match status" value="1"/>
</dbReference>
<accession>B2VCV6</accession>